<proteinExistence type="evidence at transcript level"/>
<organism>
    <name type="scientific">Mus musculus</name>
    <name type="common">Mouse</name>
    <dbReference type="NCBI Taxonomy" id="10090"/>
    <lineage>
        <taxon>Eukaryota</taxon>
        <taxon>Metazoa</taxon>
        <taxon>Chordata</taxon>
        <taxon>Craniata</taxon>
        <taxon>Vertebrata</taxon>
        <taxon>Euteleostomi</taxon>
        <taxon>Mammalia</taxon>
        <taxon>Eutheria</taxon>
        <taxon>Euarchontoglires</taxon>
        <taxon>Glires</taxon>
        <taxon>Rodentia</taxon>
        <taxon>Myomorpha</taxon>
        <taxon>Muroidea</taxon>
        <taxon>Muridae</taxon>
        <taxon>Murinae</taxon>
        <taxon>Mus</taxon>
        <taxon>Mus</taxon>
    </lineage>
</organism>
<protein>
    <recommendedName>
        <fullName>5-hydroxytryptamine receptor 1A</fullName>
        <shortName>5-HT-1A</shortName>
        <shortName>5-HT1A</shortName>
    </recommendedName>
    <alternativeName>
        <fullName>Serotonin receptor 1A</fullName>
    </alternativeName>
</protein>
<dbReference type="EMBL" id="U39391">
    <property type="protein sequence ID" value="AAA81519.1"/>
    <property type="molecule type" value="mRNA"/>
</dbReference>
<dbReference type="EMBL" id="AK043668">
    <property type="protein sequence ID" value="BAC31611.1"/>
    <property type="molecule type" value="mRNA"/>
</dbReference>
<dbReference type="EMBL" id="AK049814">
    <property type="protein sequence ID" value="BAC33931.1"/>
    <property type="molecule type" value="mRNA"/>
</dbReference>
<dbReference type="EMBL" id="AK049884">
    <property type="protein sequence ID" value="BAC33970.1"/>
    <property type="molecule type" value="mRNA"/>
</dbReference>
<dbReference type="EMBL" id="AK140194">
    <property type="protein sequence ID" value="BAE24273.1"/>
    <property type="molecule type" value="mRNA"/>
</dbReference>
<dbReference type="EMBL" id="CH466568">
    <property type="protein sequence ID" value="EDL18479.1"/>
    <property type="molecule type" value="Genomic_DNA"/>
</dbReference>
<dbReference type="EMBL" id="BC138669">
    <property type="protein sequence ID" value="AAI38670.1"/>
    <property type="molecule type" value="mRNA"/>
</dbReference>
<dbReference type="EMBL" id="BC138681">
    <property type="protein sequence ID" value="AAI38682.1"/>
    <property type="molecule type" value="mRNA"/>
</dbReference>
<dbReference type="EMBL" id="U33820">
    <property type="protein sequence ID" value="AAC52572.1"/>
    <property type="molecule type" value="Genomic_DNA"/>
</dbReference>
<dbReference type="EMBL" id="L20339">
    <property type="protein sequence ID" value="AAA16850.1"/>
    <property type="molecule type" value="mRNA"/>
</dbReference>
<dbReference type="CCDS" id="CCDS26756.1"/>
<dbReference type="PIR" id="I49375">
    <property type="entry name" value="I49375"/>
</dbReference>
<dbReference type="RefSeq" id="NP_032334.2">
    <property type="nucleotide sequence ID" value="NM_008308.4"/>
</dbReference>
<dbReference type="SMR" id="Q64264"/>
<dbReference type="BioGRID" id="200466">
    <property type="interactions" value="1"/>
</dbReference>
<dbReference type="CORUM" id="Q64264"/>
<dbReference type="FunCoup" id="Q64264">
    <property type="interactions" value="811"/>
</dbReference>
<dbReference type="STRING" id="10090.ENSMUSP00000022235"/>
<dbReference type="BindingDB" id="Q64264"/>
<dbReference type="ChEMBL" id="CHEMBL3737"/>
<dbReference type="DrugCentral" id="Q64264"/>
<dbReference type="GlyCosmos" id="Q64264">
    <property type="glycosylation" value="4 sites, No reported glycans"/>
</dbReference>
<dbReference type="GlyGen" id="Q64264">
    <property type="glycosylation" value="4 sites"/>
</dbReference>
<dbReference type="iPTMnet" id="Q64264"/>
<dbReference type="PhosphoSitePlus" id="Q64264"/>
<dbReference type="SwissPalm" id="Q64264"/>
<dbReference type="PaxDb" id="10090-ENSMUSP00000022235"/>
<dbReference type="ProteomicsDB" id="285688"/>
<dbReference type="Antibodypedia" id="2959">
    <property type="antibodies" value="309 antibodies from 38 providers"/>
</dbReference>
<dbReference type="DNASU" id="15550"/>
<dbReference type="Ensembl" id="ENSMUST00000022235.6">
    <property type="protein sequence ID" value="ENSMUSP00000022235.5"/>
    <property type="gene ID" value="ENSMUSG00000021721.6"/>
</dbReference>
<dbReference type="GeneID" id="15550"/>
<dbReference type="KEGG" id="mmu:15550"/>
<dbReference type="UCSC" id="uc007rtu.2">
    <property type="organism name" value="mouse"/>
</dbReference>
<dbReference type="AGR" id="MGI:96273"/>
<dbReference type="CTD" id="3350"/>
<dbReference type="MGI" id="MGI:96273">
    <property type="gene designation" value="Htr1a"/>
</dbReference>
<dbReference type="VEuPathDB" id="HostDB:ENSMUSG00000021721"/>
<dbReference type="eggNOG" id="KOG3656">
    <property type="taxonomic scope" value="Eukaryota"/>
</dbReference>
<dbReference type="GeneTree" id="ENSGT00940000154484"/>
<dbReference type="HOGENOM" id="CLU_009579_11_1_1"/>
<dbReference type="InParanoid" id="Q64264"/>
<dbReference type="OMA" id="VQHCNSS"/>
<dbReference type="OrthoDB" id="5955450at2759"/>
<dbReference type="PhylomeDB" id="Q64264"/>
<dbReference type="TreeFam" id="TF316350"/>
<dbReference type="Reactome" id="R-MMU-390666">
    <property type="pathway name" value="Serotonin receptors"/>
</dbReference>
<dbReference type="BioGRID-ORCS" id="15550">
    <property type="hits" value="2 hits in 77 CRISPR screens"/>
</dbReference>
<dbReference type="PRO" id="PR:Q64264"/>
<dbReference type="Proteomes" id="UP000000589">
    <property type="component" value="Chromosome 13"/>
</dbReference>
<dbReference type="RNAct" id="Q64264">
    <property type="molecule type" value="protein"/>
</dbReference>
<dbReference type="Bgee" id="ENSMUSG00000021721">
    <property type="expression patterns" value="Expressed in ventral nuclear group and 73 other cell types or tissues"/>
</dbReference>
<dbReference type="GO" id="GO:0030425">
    <property type="term" value="C:dendrite"/>
    <property type="evidence" value="ECO:0007669"/>
    <property type="project" value="UniProtKB-SubCell"/>
</dbReference>
<dbReference type="GO" id="GO:0005886">
    <property type="term" value="C:plasma membrane"/>
    <property type="evidence" value="ECO:0000250"/>
    <property type="project" value="UniProtKB"/>
</dbReference>
<dbReference type="GO" id="GO:0004993">
    <property type="term" value="F:G protein-coupled serotonin receptor activity"/>
    <property type="evidence" value="ECO:0000314"/>
    <property type="project" value="MGI"/>
</dbReference>
<dbReference type="GO" id="GO:0001586">
    <property type="term" value="F:Gi/o-coupled serotonin receptor activity"/>
    <property type="evidence" value="ECO:0007669"/>
    <property type="project" value="Ensembl"/>
</dbReference>
<dbReference type="GO" id="GO:0090722">
    <property type="term" value="F:receptor-receptor interaction"/>
    <property type="evidence" value="ECO:0007669"/>
    <property type="project" value="Ensembl"/>
</dbReference>
<dbReference type="GO" id="GO:0099589">
    <property type="term" value="F:serotonin receptor activity"/>
    <property type="evidence" value="ECO:0007669"/>
    <property type="project" value="Ensembl"/>
</dbReference>
<dbReference type="GO" id="GO:0007198">
    <property type="term" value="P:adenylate cyclase-inhibiting serotonin receptor signaling pathway"/>
    <property type="evidence" value="ECO:0000250"/>
    <property type="project" value="UniProtKB"/>
</dbReference>
<dbReference type="GO" id="GO:0001662">
    <property type="term" value="P:behavioral fear response"/>
    <property type="evidence" value="ECO:0000315"/>
    <property type="project" value="UniProtKB"/>
</dbReference>
<dbReference type="GO" id="GO:0035640">
    <property type="term" value="P:exploration behavior"/>
    <property type="evidence" value="ECO:0000315"/>
    <property type="project" value="UniProtKB"/>
</dbReference>
<dbReference type="GO" id="GO:0007214">
    <property type="term" value="P:gamma-aminobutyric acid signaling pathway"/>
    <property type="evidence" value="ECO:0000315"/>
    <property type="project" value="MGI"/>
</dbReference>
<dbReference type="GO" id="GO:0050795">
    <property type="term" value="P:regulation of behavior"/>
    <property type="evidence" value="ECO:0007669"/>
    <property type="project" value="InterPro"/>
</dbReference>
<dbReference type="GO" id="GO:0042053">
    <property type="term" value="P:regulation of dopamine metabolic process"/>
    <property type="evidence" value="ECO:0000315"/>
    <property type="project" value="UniProtKB"/>
</dbReference>
<dbReference type="GO" id="GO:0046883">
    <property type="term" value="P:regulation of hormone secretion"/>
    <property type="evidence" value="ECO:0007669"/>
    <property type="project" value="InterPro"/>
</dbReference>
<dbReference type="GO" id="GO:0014062">
    <property type="term" value="P:regulation of serotonin secretion"/>
    <property type="evidence" value="ECO:0000315"/>
    <property type="project" value="UniProtKB"/>
</dbReference>
<dbReference type="GO" id="GO:0019229">
    <property type="term" value="P:regulation of vasoconstriction"/>
    <property type="evidence" value="ECO:0007669"/>
    <property type="project" value="InterPro"/>
</dbReference>
<dbReference type="GO" id="GO:0042428">
    <property type="term" value="P:serotonin metabolic process"/>
    <property type="evidence" value="ECO:0000315"/>
    <property type="project" value="UniProtKB"/>
</dbReference>
<dbReference type="GO" id="GO:0007210">
    <property type="term" value="P:serotonin receptor signaling pathway"/>
    <property type="evidence" value="ECO:0000315"/>
    <property type="project" value="UniProtKB"/>
</dbReference>
<dbReference type="CDD" id="cd15330">
    <property type="entry name" value="7tmA_5-HT1A_vertebrates"/>
    <property type="match status" value="1"/>
</dbReference>
<dbReference type="Gene3D" id="1.20.1070.10">
    <property type="entry name" value="Rhodopsin 7-helix transmembrane proteins"/>
    <property type="match status" value="1"/>
</dbReference>
<dbReference type="InterPro" id="IPR000610">
    <property type="entry name" value="5HT1A_rcpt"/>
</dbReference>
<dbReference type="InterPro" id="IPR002231">
    <property type="entry name" value="5HT_rcpt"/>
</dbReference>
<dbReference type="InterPro" id="IPR000276">
    <property type="entry name" value="GPCR_Rhodpsn"/>
</dbReference>
<dbReference type="InterPro" id="IPR017452">
    <property type="entry name" value="GPCR_Rhodpsn_7TM"/>
</dbReference>
<dbReference type="PANTHER" id="PTHR24248:SF191">
    <property type="entry name" value="5-HYDROXYTRYPTAMINE RECEPTOR 1A"/>
    <property type="match status" value="1"/>
</dbReference>
<dbReference type="PANTHER" id="PTHR24248">
    <property type="entry name" value="ADRENERGIC RECEPTOR-RELATED G-PROTEIN COUPLED RECEPTOR"/>
    <property type="match status" value="1"/>
</dbReference>
<dbReference type="Pfam" id="PF00001">
    <property type="entry name" value="7tm_1"/>
    <property type="match status" value="1"/>
</dbReference>
<dbReference type="PRINTS" id="PR00512">
    <property type="entry name" value="5HT1ARECEPTR"/>
</dbReference>
<dbReference type="PRINTS" id="PR01101">
    <property type="entry name" value="5HTRECEPTOR"/>
</dbReference>
<dbReference type="PRINTS" id="PR00237">
    <property type="entry name" value="GPCRRHODOPSN"/>
</dbReference>
<dbReference type="SMART" id="SM01381">
    <property type="entry name" value="7TM_GPCR_Srsx"/>
    <property type="match status" value="1"/>
</dbReference>
<dbReference type="SUPFAM" id="SSF81321">
    <property type="entry name" value="Family A G protein-coupled receptor-like"/>
    <property type="match status" value="1"/>
</dbReference>
<dbReference type="PROSITE" id="PS00237">
    <property type="entry name" value="G_PROTEIN_RECEP_F1_1"/>
    <property type="match status" value="1"/>
</dbReference>
<dbReference type="PROSITE" id="PS50262">
    <property type="entry name" value="G_PROTEIN_RECEP_F1_2"/>
    <property type="match status" value="1"/>
</dbReference>
<evidence type="ECO:0000250" key="1">
    <source>
        <dbReference type="UniProtKB" id="P08908"/>
    </source>
</evidence>
<evidence type="ECO:0000250" key="2">
    <source>
        <dbReference type="UniProtKB" id="P19327"/>
    </source>
</evidence>
<evidence type="ECO:0000250" key="3">
    <source>
        <dbReference type="UniProtKB" id="P41595"/>
    </source>
</evidence>
<evidence type="ECO:0000255" key="4"/>
<evidence type="ECO:0000255" key="5">
    <source>
        <dbReference type="PROSITE-ProRule" id="PRU00521"/>
    </source>
</evidence>
<evidence type="ECO:0000256" key="6">
    <source>
        <dbReference type="SAM" id="MobiDB-lite"/>
    </source>
</evidence>
<evidence type="ECO:0000269" key="7">
    <source>
    </source>
</evidence>
<evidence type="ECO:0000269" key="8">
    <source>
    </source>
</evidence>
<evidence type="ECO:0000269" key="9">
    <source>
    </source>
</evidence>
<evidence type="ECO:0000269" key="10">
    <source>
    </source>
</evidence>
<evidence type="ECO:0000269" key="11">
    <source>
    </source>
</evidence>
<evidence type="ECO:0000269" key="12">
    <source>
    </source>
</evidence>
<evidence type="ECO:0000305" key="13"/>
<keyword id="KW-0085">Behavior</keyword>
<keyword id="KW-1003">Cell membrane</keyword>
<keyword id="KW-0966">Cell projection</keyword>
<keyword id="KW-1015">Disulfide bond</keyword>
<keyword id="KW-0297">G-protein coupled receptor</keyword>
<keyword id="KW-0325">Glycoprotein</keyword>
<keyword id="KW-0472">Membrane</keyword>
<keyword id="KW-0675">Receptor</keyword>
<keyword id="KW-1185">Reference proteome</keyword>
<keyword id="KW-0807">Transducer</keyword>
<keyword id="KW-0812">Transmembrane</keyword>
<keyword id="KW-1133">Transmembrane helix</keyword>
<sequence length="421" mass="46176">MDMFSLGQGNNTTTSLEPFGTGGNDTGLSNVTFSYQVITSLLLGTLIFCAVLGNACVVAAIALERSLQNVANYLIGSLAVTDLMVSVLVLPMAALYQVLNKWTLGQVTCDLFIALDVLCCTSSILHLCAIALDRYWAITDPIDYVNKRTPRRAAALISLTWLIGFLISIPPMLGWRTPEDRSNPNECTISKDHGYTIYSTFGAFYIPLLLMLVLYGRIFRAARFRIRKTVKKVEKKGAGTSFGTSSAPPPKKSLNGQPGSGDCRRSAENRAVGTPCANGAVRQGEDDATLEVIEVHRVGNSKGHLPLPSESGATSYVPACLERKNERTAEAKRKMALARERKTVKTLGIIMGTFILCWLPFFIVALVLPFCESSCHMPELLGAIINWLGYSNSLLNPVIYAYFNKDFQNAFKKIIKCKFCR</sequence>
<gene>
    <name type="primary">Htr1a</name>
    <name type="synonym">Gpcr18</name>
</gene>
<reference key="1">
    <citation type="journal article" date="1993" name="J. Neurosci.">
        <title>Cloning and differentiation-induced expression of a murine serotonin 1A receptor in a septal cell line.</title>
        <authorList>
            <person name="Charest A."/>
            <person name="Wainer B.H."/>
            <person name="Albert P.R."/>
        </authorList>
    </citation>
    <scope>NUCLEOTIDE SEQUENCE [MRNA]</scope>
    <scope>FUNCTION</scope>
    <scope>SUBCELLULAR LOCATION</scope>
    <source>
        <strain>NIH Swiss</strain>
        <tissue>Brain</tissue>
    </source>
</reference>
<reference key="2">
    <citation type="journal article" date="2005" name="Science">
        <title>The transcriptional landscape of the mammalian genome.</title>
        <authorList>
            <person name="Carninci P."/>
            <person name="Kasukawa T."/>
            <person name="Katayama S."/>
            <person name="Gough J."/>
            <person name="Frith M.C."/>
            <person name="Maeda N."/>
            <person name="Oyama R."/>
            <person name="Ravasi T."/>
            <person name="Lenhard B."/>
            <person name="Wells C."/>
            <person name="Kodzius R."/>
            <person name="Shimokawa K."/>
            <person name="Bajic V.B."/>
            <person name="Brenner S.E."/>
            <person name="Batalov S."/>
            <person name="Forrest A.R."/>
            <person name="Zavolan M."/>
            <person name="Davis M.J."/>
            <person name="Wilming L.G."/>
            <person name="Aidinis V."/>
            <person name="Allen J.E."/>
            <person name="Ambesi-Impiombato A."/>
            <person name="Apweiler R."/>
            <person name="Aturaliya R.N."/>
            <person name="Bailey T.L."/>
            <person name="Bansal M."/>
            <person name="Baxter L."/>
            <person name="Beisel K.W."/>
            <person name="Bersano T."/>
            <person name="Bono H."/>
            <person name="Chalk A.M."/>
            <person name="Chiu K.P."/>
            <person name="Choudhary V."/>
            <person name="Christoffels A."/>
            <person name="Clutterbuck D.R."/>
            <person name="Crowe M.L."/>
            <person name="Dalla E."/>
            <person name="Dalrymple B.P."/>
            <person name="de Bono B."/>
            <person name="Della Gatta G."/>
            <person name="di Bernardo D."/>
            <person name="Down T."/>
            <person name="Engstrom P."/>
            <person name="Fagiolini M."/>
            <person name="Faulkner G."/>
            <person name="Fletcher C.F."/>
            <person name="Fukushima T."/>
            <person name="Furuno M."/>
            <person name="Futaki S."/>
            <person name="Gariboldi M."/>
            <person name="Georgii-Hemming P."/>
            <person name="Gingeras T.R."/>
            <person name="Gojobori T."/>
            <person name="Green R.E."/>
            <person name="Gustincich S."/>
            <person name="Harbers M."/>
            <person name="Hayashi Y."/>
            <person name="Hensch T.K."/>
            <person name="Hirokawa N."/>
            <person name="Hill D."/>
            <person name="Huminiecki L."/>
            <person name="Iacono M."/>
            <person name="Ikeo K."/>
            <person name="Iwama A."/>
            <person name="Ishikawa T."/>
            <person name="Jakt M."/>
            <person name="Kanapin A."/>
            <person name="Katoh M."/>
            <person name="Kawasawa Y."/>
            <person name="Kelso J."/>
            <person name="Kitamura H."/>
            <person name="Kitano H."/>
            <person name="Kollias G."/>
            <person name="Krishnan S.P."/>
            <person name="Kruger A."/>
            <person name="Kummerfeld S.K."/>
            <person name="Kurochkin I.V."/>
            <person name="Lareau L.F."/>
            <person name="Lazarevic D."/>
            <person name="Lipovich L."/>
            <person name="Liu J."/>
            <person name="Liuni S."/>
            <person name="McWilliam S."/>
            <person name="Madan Babu M."/>
            <person name="Madera M."/>
            <person name="Marchionni L."/>
            <person name="Matsuda H."/>
            <person name="Matsuzawa S."/>
            <person name="Miki H."/>
            <person name="Mignone F."/>
            <person name="Miyake S."/>
            <person name="Morris K."/>
            <person name="Mottagui-Tabar S."/>
            <person name="Mulder N."/>
            <person name="Nakano N."/>
            <person name="Nakauchi H."/>
            <person name="Ng P."/>
            <person name="Nilsson R."/>
            <person name="Nishiguchi S."/>
            <person name="Nishikawa S."/>
            <person name="Nori F."/>
            <person name="Ohara O."/>
            <person name="Okazaki Y."/>
            <person name="Orlando V."/>
            <person name="Pang K.C."/>
            <person name="Pavan W.J."/>
            <person name="Pavesi G."/>
            <person name="Pesole G."/>
            <person name="Petrovsky N."/>
            <person name="Piazza S."/>
            <person name="Reed J."/>
            <person name="Reid J.F."/>
            <person name="Ring B.Z."/>
            <person name="Ringwald M."/>
            <person name="Rost B."/>
            <person name="Ruan Y."/>
            <person name="Salzberg S.L."/>
            <person name="Sandelin A."/>
            <person name="Schneider C."/>
            <person name="Schoenbach C."/>
            <person name="Sekiguchi K."/>
            <person name="Semple C.A."/>
            <person name="Seno S."/>
            <person name="Sessa L."/>
            <person name="Sheng Y."/>
            <person name="Shibata Y."/>
            <person name="Shimada H."/>
            <person name="Shimada K."/>
            <person name="Silva D."/>
            <person name="Sinclair B."/>
            <person name="Sperling S."/>
            <person name="Stupka E."/>
            <person name="Sugiura K."/>
            <person name="Sultana R."/>
            <person name="Takenaka Y."/>
            <person name="Taki K."/>
            <person name="Tammoja K."/>
            <person name="Tan S.L."/>
            <person name="Tang S."/>
            <person name="Taylor M.S."/>
            <person name="Tegner J."/>
            <person name="Teichmann S.A."/>
            <person name="Ueda H.R."/>
            <person name="van Nimwegen E."/>
            <person name="Verardo R."/>
            <person name="Wei C.L."/>
            <person name="Yagi K."/>
            <person name="Yamanishi H."/>
            <person name="Zabarovsky E."/>
            <person name="Zhu S."/>
            <person name="Zimmer A."/>
            <person name="Hide W."/>
            <person name="Bult C."/>
            <person name="Grimmond S.M."/>
            <person name="Teasdale R.D."/>
            <person name="Liu E.T."/>
            <person name="Brusic V."/>
            <person name="Quackenbush J."/>
            <person name="Wahlestedt C."/>
            <person name="Mattick J.S."/>
            <person name="Hume D.A."/>
            <person name="Kai C."/>
            <person name="Sasaki D."/>
            <person name="Tomaru Y."/>
            <person name="Fukuda S."/>
            <person name="Kanamori-Katayama M."/>
            <person name="Suzuki M."/>
            <person name="Aoki J."/>
            <person name="Arakawa T."/>
            <person name="Iida J."/>
            <person name="Imamura K."/>
            <person name="Itoh M."/>
            <person name="Kato T."/>
            <person name="Kawaji H."/>
            <person name="Kawagashira N."/>
            <person name="Kawashima T."/>
            <person name="Kojima M."/>
            <person name="Kondo S."/>
            <person name="Konno H."/>
            <person name="Nakano K."/>
            <person name="Ninomiya N."/>
            <person name="Nishio T."/>
            <person name="Okada M."/>
            <person name="Plessy C."/>
            <person name="Shibata K."/>
            <person name="Shiraki T."/>
            <person name="Suzuki S."/>
            <person name="Tagami M."/>
            <person name="Waki K."/>
            <person name="Watahiki A."/>
            <person name="Okamura-Oho Y."/>
            <person name="Suzuki H."/>
            <person name="Kawai J."/>
            <person name="Hayashizaki Y."/>
        </authorList>
    </citation>
    <scope>NUCLEOTIDE SEQUENCE [LARGE SCALE MRNA]</scope>
    <source>
        <strain>C57BL/6J</strain>
        <tissue>Brain cortex</tissue>
        <tissue>Corpora quadrigemina</tissue>
        <tissue>Hippocampus</tissue>
    </source>
</reference>
<reference key="3">
    <citation type="submission" date="2005-09" db="EMBL/GenBank/DDBJ databases">
        <authorList>
            <person name="Mural R.J."/>
            <person name="Adams M.D."/>
            <person name="Myers E.W."/>
            <person name="Smith H.O."/>
            <person name="Venter J.C."/>
        </authorList>
    </citation>
    <scope>NUCLEOTIDE SEQUENCE [LARGE SCALE GENOMIC DNA]</scope>
</reference>
<reference key="4">
    <citation type="journal article" date="2004" name="Genome Res.">
        <title>The status, quality, and expansion of the NIH full-length cDNA project: the Mammalian Gene Collection (MGC).</title>
        <authorList>
            <consortium name="The MGC Project Team"/>
        </authorList>
    </citation>
    <scope>NUCLEOTIDE SEQUENCE [LARGE SCALE MRNA]</scope>
    <source>
        <tissue>Brain</tissue>
    </source>
</reference>
<reference key="5">
    <citation type="journal article" date="1996" name="J. Biol. Chem.">
        <title>The serotonin 1a receptor gene contains a TATA-less promoter that responds to MAZ and Sp1.</title>
        <authorList>
            <person name="Parks C.L."/>
            <person name="Shenk T."/>
        </authorList>
    </citation>
    <scope>NUCLEOTIDE SEQUENCE [GENOMIC DNA] OF 1-23</scope>
    <source>
        <strain>C3H/An</strain>
    </source>
</reference>
<reference key="6">
    <citation type="journal article" date="1993" name="Genomics">
        <title>Identification, chromosomal location, and genome organization of mammalian G-protein-coupled receptors.</title>
        <authorList>
            <person name="Wilkie T.M."/>
            <person name="Chen Y."/>
            <person name="Gilbert D.J."/>
            <person name="Moore K.J."/>
            <person name="Yu L."/>
            <person name="Simon M.I."/>
            <person name="Copeland N.G."/>
            <person name="Jenkins N.A."/>
        </authorList>
    </citation>
    <scope>NUCLEOTIDE SEQUENCE [MRNA] OF 136-353</scope>
    <source>
        <tissue>Testis</tissue>
    </source>
</reference>
<reference key="7">
    <citation type="journal article" date="1998" name="Proc. Natl. Acad. Sci. U.S.A.">
        <title>Serotonin receptor 1A knockout: an animal model of anxiety-related disorder.</title>
        <authorList>
            <person name="Ramboz S."/>
            <person name="Oosting R."/>
            <person name="Amara D.A."/>
            <person name="Kung H.F."/>
            <person name="Blier P."/>
            <person name="Mendelsohn M."/>
            <person name="Mann J.J."/>
            <person name="Brunner D."/>
            <person name="Hen R."/>
        </authorList>
    </citation>
    <scope>DISRUPTION PHENOTYPE</scope>
    <scope>TISSUE SPECIFICITY</scope>
    <scope>FUNCTION</scope>
</reference>
<reference key="8">
    <citation type="journal article" date="2000" name="J. Neurochem.">
        <title>Altered serotonin and dopamine metabolism in the CNS of serotonin 5-HT(1A) or 5-HT(1B) receptor knockout mice.</title>
        <authorList>
            <person name="Ase A.R."/>
            <person name="Reader T.A."/>
            <person name="Hen R."/>
            <person name="Riad M."/>
            <person name="Descarries L."/>
        </authorList>
    </citation>
    <scope>DISRUPTION PHENOTYPE</scope>
    <scope>FUNCTION</scope>
</reference>
<reference key="9">
    <citation type="journal article" date="2007" name="Neuroscience">
        <title>Embryonic and postnatal development of the serotonergic raphe system and its target regions in 5-HT1A receptor deletion or overexpressing mouse mutants.</title>
        <authorList>
            <person name="Deng D.R."/>
            <person name="Djalali S."/>
            <person name="Holtje M."/>
            <person name="Grosse G."/>
            <person name="Stroh T."/>
            <person name="Voigt I."/>
            <person name="Kusserow H."/>
            <person name="Theuring F."/>
            <person name="Ahnert-Hilger G."/>
            <person name="Hortnagl H."/>
        </authorList>
    </citation>
    <scope>DISRUPTION PHENOTYPE</scope>
    <scope>FUNCTION</scope>
</reference>
<reference key="10">
    <citation type="journal article" date="2008" name="Science">
        <title>Sporadic autonomic dysregulation and death associated with excessive serotonin autoinhibition.</title>
        <authorList>
            <person name="Audero E."/>
            <person name="Coppi E."/>
            <person name="Mlinar B."/>
            <person name="Rossetti T."/>
            <person name="Caprioli A."/>
            <person name="Banchaabouchi M.A."/>
            <person name="Corradetti R."/>
            <person name="Gross C."/>
        </authorList>
    </citation>
    <scope>FUNCTION</scope>
</reference>
<reference key="11">
    <citation type="journal article" date="2011" name="J. Neurosci.">
        <title>Serotonin-1A autoreceptors are necessary and sufficient for the normal formation of circuits underlying innate anxiety.</title>
        <authorList>
            <person name="Richardson-Jones J.W."/>
            <person name="Craige C.P."/>
            <person name="Nguyen T.H."/>
            <person name="Kung H.F."/>
            <person name="Gardier A.M."/>
            <person name="Dranovsky A."/>
            <person name="David D.J."/>
            <person name="Guiard B.P."/>
            <person name="Beck S.G."/>
            <person name="Hen R."/>
            <person name="Leonardo E.D."/>
        </authorList>
    </citation>
    <scope>FUNCTION</scope>
</reference>
<comment type="function">
    <text evidence="1 7 8 9 10 11 12">G-protein coupled receptor for 5-hydroxytryptamine (serotonin) (PubMed:11080193, PubMed:17543467, PubMed:18599790, PubMed:21508226, PubMed:8254366, PubMed:9826725). Also functions as a receptor for various drugs and psychoactive substances (PubMed:11080193, PubMed:17543467, PubMed:18599790, PubMed:21508226, PubMed:8254366, PubMed:9826725). Ligand binding causes a conformation change that triggers signaling via guanine nucleotide-binding proteins (G proteins) and modulates the activity of downstream effectors, such as adenylate cyclase (By similarity). HTR1A is coupled to G(i)/G(o) G alpha proteins and mediates inhibitory neurotransmission: signaling inhibits adenylate cyclase activity and activates a phosphatidylinositol-calcium second messenger system that regulates the release of Ca(2+) ions from intracellular stores (By similarity). Beta-arrestin family members regulate signaling by mediating both receptor desensitization and resensitization processes (By similarity).</text>
</comment>
<comment type="activity regulation">
    <text evidence="1 7 8 9 10 11 12">G-protein coupled receptor activity is regulated by lipids: phosphatidylinositol 4-phosphate increases HTR1A-mediated activity (By similarity). Plays a role in the regulation of dopamine and 5-hydroxytryptamine levels in the brain, and thereby affects neural activity, mood and behavior. Plays a role in the response to anxiogenic stimuli (PubMed:11080193, PubMed:17543467, PubMed:18599790, PubMed:21508226, PubMed:8254366, PubMed:9826725).</text>
</comment>
<comment type="subunit">
    <text evidence="1 2">Heterodimer; heterodimerizes with GPER1 (By similarity). Interacts with YIF1B (By similarity). Interacts with GPR39 and GALR1 (By similarity).</text>
</comment>
<comment type="subcellular location">
    <subcellularLocation>
        <location evidence="11">Cell membrane</location>
        <topology evidence="1">Multi-pass membrane protein</topology>
    </subcellularLocation>
    <subcellularLocation>
        <location evidence="2">Cell projection</location>
        <location evidence="2">Dendrite</location>
    </subcellularLocation>
</comment>
<comment type="tissue specificity">
    <text evidence="12">Most abundantly expressed in midbrain, in dorsal raphe and hippocampus. Detected at lower levels in amygdala and brain cortex.</text>
</comment>
<comment type="disruption phenotype">
    <text evidence="7 8 12">Mutant mice display decreased exploratory behavior and increased fear-related behavior in anxiogenic environments. Mutant mice display altered monoamine metabolism in specific parts of the brain, especially in dorsal and medial raphe nuclei, thalamus and hypothalamus, leading to altered levels of 5-hydroxytryptamine, dopamine and their metabolites, as well as altered noradrenaline levels.</text>
</comment>
<comment type="similarity">
    <text evidence="5">Belongs to the G-protein coupled receptor 1 family. 5-hydroxytryptamine receptor subfamily. HTR1A sub-subfamily.</text>
</comment>
<accession>Q64264</accession>
<accession>Q60956</accession>
<accession>Q61617</accession>
<accession>Q8BGS4</accession>
<name>5HT1A_MOUSE</name>
<feature type="chain" id="PRO_0000068904" description="5-hydroxytryptamine receptor 1A">
    <location>
        <begin position="1"/>
        <end position="421"/>
    </location>
</feature>
<feature type="topological domain" description="Extracellular" evidence="1">
    <location>
        <begin position="1"/>
        <end position="38"/>
    </location>
</feature>
<feature type="transmembrane region" description="Helical; Name=1" evidence="1">
    <location>
        <begin position="39"/>
        <end position="59"/>
    </location>
</feature>
<feature type="topological domain" description="Cytoplasmic" evidence="1">
    <location>
        <begin position="60"/>
        <end position="73"/>
    </location>
</feature>
<feature type="transmembrane region" description="Helical; Name=2" evidence="1">
    <location>
        <begin position="74"/>
        <end position="98"/>
    </location>
</feature>
<feature type="topological domain" description="Extracellular" evidence="1">
    <location>
        <begin position="99"/>
        <end position="107"/>
    </location>
</feature>
<feature type="transmembrane region" description="Helical; Name=3" evidence="1">
    <location>
        <begin position="108"/>
        <end position="132"/>
    </location>
</feature>
<feature type="topological domain" description="Cytoplasmic" evidence="1">
    <location>
        <begin position="133"/>
        <end position="152"/>
    </location>
</feature>
<feature type="transmembrane region" description="Helical; Name=4" evidence="1">
    <location>
        <begin position="153"/>
        <end position="174"/>
    </location>
</feature>
<feature type="topological domain" description="Extracellular" evidence="1">
    <location>
        <begin position="175"/>
        <end position="193"/>
    </location>
</feature>
<feature type="transmembrane region" description="Helical; Name=5" evidence="1">
    <location>
        <begin position="194"/>
        <end position="216"/>
    </location>
</feature>
<feature type="topological domain" description="Cytoplasmic" evidence="1">
    <location>
        <begin position="217"/>
        <end position="346"/>
    </location>
</feature>
<feature type="transmembrane region" description="Helical; Name=6" evidence="1">
    <location>
        <begin position="347"/>
        <end position="370"/>
    </location>
</feature>
<feature type="topological domain" description="Extracellular" evidence="1">
    <location>
        <begin position="371"/>
        <end position="378"/>
    </location>
</feature>
<feature type="transmembrane region" description="Helical; Name=7" evidence="1">
    <location>
        <begin position="379"/>
        <end position="403"/>
    </location>
</feature>
<feature type="topological domain" description="Cytoplasmic" evidence="1">
    <location>
        <begin position="404"/>
        <end position="421"/>
    </location>
</feature>
<feature type="region of interest" description="Disordered" evidence="6">
    <location>
        <begin position="237"/>
        <end position="268"/>
    </location>
</feature>
<feature type="short sequence motif" description="DRY motif; important for ligand-induced conformation changes" evidence="3">
    <location>
        <begin position="133"/>
        <end position="135"/>
    </location>
</feature>
<feature type="short sequence motif" description="NPxxY motif; important for ligand-induced conformation changes and signaling" evidence="3">
    <location>
        <begin position="396"/>
        <end position="400"/>
    </location>
</feature>
<feature type="binding site" evidence="1">
    <location>
        <position position="116"/>
    </location>
    <ligand>
        <name>serotonin</name>
        <dbReference type="ChEBI" id="CHEBI:350546"/>
    </ligand>
</feature>
<feature type="binding site" evidence="1">
    <location>
        <position position="120"/>
    </location>
    <ligand>
        <name>serotonin</name>
        <dbReference type="ChEBI" id="CHEBI:350546"/>
    </ligand>
</feature>
<feature type="binding site" evidence="1">
    <location>
        <position position="314"/>
    </location>
    <ligand>
        <name>1D-myo-inositol 4-phosphate</name>
        <dbReference type="ChEBI" id="CHEBI:58469"/>
    </ligand>
</feature>
<feature type="binding site" evidence="1">
    <location>
        <position position="345"/>
    </location>
    <ligand>
        <name>1D-myo-inositol 4-phosphate</name>
        <dbReference type="ChEBI" id="CHEBI:58469"/>
    </ligand>
</feature>
<feature type="binding site" evidence="1">
    <location>
        <position position="346"/>
    </location>
    <ligand>
        <name>1D-myo-inositol 4-phosphate</name>
        <dbReference type="ChEBI" id="CHEBI:58469"/>
    </ligand>
</feature>
<feature type="binding site" evidence="1">
    <location>
        <position position="352"/>
    </location>
    <ligand>
        <name>1D-myo-inositol 4-phosphate</name>
        <dbReference type="ChEBI" id="CHEBI:58469"/>
    </ligand>
</feature>
<feature type="binding site" evidence="1">
    <location>
        <position position="403"/>
    </location>
    <ligand>
        <name>1D-myo-inositol 4-phosphate</name>
        <dbReference type="ChEBI" id="CHEBI:58469"/>
    </ligand>
</feature>
<feature type="binding site" evidence="1">
    <location>
        <position position="404"/>
    </location>
    <ligand>
        <name>1D-myo-inositol 4-phosphate</name>
        <dbReference type="ChEBI" id="CHEBI:58469"/>
    </ligand>
</feature>
<feature type="binding site" evidence="1">
    <location>
        <position position="405"/>
    </location>
    <ligand>
        <name>1D-myo-inositol 4-phosphate</name>
        <dbReference type="ChEBI" id="CHEBI:58469"/>
    </ligand>
</feature>
<feature type="glycosylation site" description="N-linked (GlcNAc...) asparagine" evidence="4">
    <location>
        <position position="10"/>
    </location>
</feature>
<feature type="glycosylation site" description="N-linked (GlcNAc...) asparagine" evidence="4">
    <location>
        <position position="11"/>
    </location>
</feature>
<feature type="glycosylation site" description="N-linked (GlcNAc...) asparagine" evidence="4">
    <location>
        <position position="24"/>
    </location>
</feature>
<feature type="glycosylation site" description="N-linked (GlcNAc...) asparagine" evidence="4">
    <location>
        <position position="30"/>
    </location>
</feature>
<feature type="disulfide bond" evidence="5">
    <location>
        <begin position="109"/>
        <end position="187"/>
    </location>
</feature>
<feature type="sequence variant" description="In strain: C3H/An.">
    <original>EPF</original>
    <variation>DHL</variation>
    <location>
        <begin position="17"/>
        <end position="19"/>
    </location>
</feature>
<feature type="sequence conflict" description="In Ref. 1; AAA81519." evidence="13" ref="1">
    <original>T</original>
    <variation>A</variation>
    <location>
        <position position="177"/>
    </location>
</feature>
<feature type="sequence conflict" description="In Ref. 6; AAA16850." evidence="13" ref="6">
    <original>F</original>
    <variation>L</variation>
    <location>
        <position position="242"/>
    </location>
</feature>
<feature type="sequence conflict" description="In Ref. 6; AAA16850." evidence="13" ref="6">
    <original>A</original>
    <variation>V</variation>
    <location>
        <position position="247"/>
    </location>
</feature>
<feature type="sequence conflict" description="In Ref. 6; AAA16850." evidence="13" ref="6">
    <original>C</original>
    <variation>W</variation>
    <location>
        <position position="263"/>
    </location>
</feature>
<feature type="sequence conflict" description="In Ref. 1; AAA81519." evidence="13" ref="1">
    <original>H</original>
    <variation>D</variation>
    <location>
        <position position="304"/>
    </location>
</feature>